<evidence type="ECO:0000255" key="1"/>
<evidence type="ECO:0000305" key="2"/>
<proteinExistence type="predicted"/>
<feature type="chain" id="PRO_0000202323" description="Uncharacterized protein TP_0783">
    <location>
        <begin position="1"/>
        <end position="377"/>
    </location>
</feature>
<feature type="transmembrane region" description="Helical" evidence="1">
    <location>
        <begin position="21"/>
        <end position="43"/>
    </location>
</feature>
<accession>O83762</accession>
<reference key="1">
    <citation type="journal article" date="1998" name="Science">
        <title>Complete genome sequence of Treponema pallidum, the syphilis spirochete.</title>
        <authorList>
            <person name="Fraser C.M."/>
            <person name="Norris S.J."/>
            <person name="Weinstock G.M."/>
            <person name="White O."/>
            <person name="Sutton G.G."/>
            <person name="Dodson R.J."/>
            <person name="Gwinn M.L."/>
            <person name="Hickey E.K."/>
            <person name="Clayton R.A."/>
            <person name="Ketchum K.A."/>
            <person name="Sodergren E."/>
            <person name="Hardham J.M."/>
            <person name="McLeod M.P."/>
            <person name="Salzberg S.L."/>
            <person name="Peterson J.D."/>
            <person name="Khalak H.G."/>
            <person name="Richardson D.L."/>
            <person name="Howell J.K."/>
            <person name="Chidambaram M."/>
            <person name="Utterback T.R."/>
            <person name="McDonald L.A."/>
            <person name="Artiach P."/>
            <person name="Bowman C."/>
            <person name="Cotton M.D."/>
            <person name="Fujii C."/>
            <person name="Garland S.A."/>
            <person name="Hatch B."/>
            <person name="Horst K."/>
            <person name="Roberts K.M."/>
            <person name="Sandusky M."/>
            <person name="Weidman J.F."/>
            <person name="Smith H.O."/>
            <person name="Venter J.C."/>
        </authorList>
    </citation>
    <scope>NUCLEOTIDE SEQUENCE [LARGE SCALE GENOMIC DNA]</scope>
    <source>
        <strain>Nichols</strain>
    </source>
</reference>
<dbReference type="EMBL" id="AE000520">
    <property type="protein sequence ID" value="AAC65753.2"/>
    <property type="molecule type" value="Genomic_DNA"/>
</dbReference>
<dbReference type="PIR" id="H71282">
    <property type="entry name" value="H71282"/>
</dbReference>
<dbReference type="RefSeq" id="WP_010882228.1">
    <property type="nucleotide sequence ID" value="NC_000919.1"/>
</dbReference>
<dbReference type="STRING" id="243276.TP_0783"/>
<dbReference type="EnsemblBacteria" id="AAC65753">
    <property type="protein sequence ID" value="AAC65753"/>
    <property type="gene ID" value="TP_0783"/>
</dbReference>
<dbReference type="KEGG" id="tpa:TP_0783"/>
<dbReference type="eggNOG" id="ENOG502ZG03">
    <property type="taxonomic scope" value="Bacteria"/>
</dbReference>
<dbReference type="HOGENOM" id="CLU_056949_0_0_12"/>
<dbReference type="OrthoDB" id="358864at2"/>
<dbReference type="Proteomes" id="UP000000811">
    <property type="component" value="Chromosome"/>
</dbReference>
<dbReference type="GO" id="GO:0016020">
    <property type="term" value="C:membrane"/>
    <property type="evidence" value="ECO:0007669"/>
    <property type="project" value="UniProtKB-SubCell"/>
</dbReference>
<dbReference type="InterPro" id="IPR011044">
    <property type="entry name" value="Quino_amine_DH_bsu"/>
</dbReference>
<dbReference type="SUPFAM" id="SSF50969">
    <property type="entry name" value="YVTN repeat-like/Quinoprotein amine dehydrogenase"/>
    <property type="match status" value="1"/>
</dbReference>
<comment type="subcellular location">
    <subcellularLocation>
        <location evidence="2">Membrane</location>
        <topology evidence="2">Single-pass membrane protein</topology>
    </subcellularLocation>
</comment>
<organism>
    <name type="scientific">Treponema pallidum (strain Nichols)</name>
    <dbReference type="NCBI Taxonomy" id="243276"/>
    <lineage>
        <taxon>Bacteria</taxon>
        <taxon>Pseudomonadati</taxon>
        <taxon>Spirochaetota</taxon>
        <taxon>Spirochaetia</taxon>
        <taxon>Spirochaetales</taxon>
        <taxon>Treponemataceae</taxon>
        <taxon>Treponema</taxon>
    </lineage>
</organism>
<keyword id="KW-0472">Membrane</keyword>
<keyword id="KW-1185">Reference proteome</keyword>
<keyword id="KW-0812">Transmembrane</keyword>
<keyword id="KW-1133">Transmembrane helix</keyword>
<protein>
    <recommendedName>
        <fullName>Uncharacterized protein TP_0783</fullName>
    </recommendedName>
</protein>
<gene>
    <name type="ordered locus">TP_0783</name>
</gene>
<name>Y783_TREPA</name>
<sequence>MKEIARHCTFSPMKIKEKKGYFISFSALFLIAYMFVAAVPLGADPYFLPIWARDLASELHXERPERAVRVNADTVQTLQPFMVGEYFGYFTDZGSVVFATRVTQRLSASTHAWAVYPEHAVRTPVFNPAGEHLAEIAEPGFVHIEADRFFLFSPGGNAVSSYDARGVQRWRVLHTAPITAFHSSAAGAVIGFSDGKVMVVRADGTVRCAFYPGGSTYEIVFGVTLSADGTLAACVCGLDRQRVILVSLADVQCKIVHHQYLEGALRHQLLMNFDTEGRYVVFEHAQGVGVIDCQRLETNIIPLVGDVVGMGVQPECDVVTVLSQKEQRCRFAVFERAVHRVGDVRFDAQDVSLTQGEKKFFLSIDMLLARIDIAGIP</sequence>